<reference key="1">
    <citation type="journal article" date="1999" name="Nature">
        <title>Sequence and analysis of chromosome 4 of the plant Arabidopsis thaliana.</title>
        <authorList>
            <person name="Mayer K.F.X."/>
            <person name="Schueller C."/>
            <person name="Wambutt R."/>
            <person name="Murphy G."/>
            <person name="Volckaert G."/>
            <person name="Pohl T."/>
            <person name="Duesterhoeft A."/>
            <person name="Stiekema W."/>
            <person name="Entian K.-D."/>
            <person name="Terryn N."/>
            <person name="Harris B."/>
            <person name="Ansorge W."/>
            <person name="Brandt P."/>
            <person name="Grivell L.A."/>
            <person name="Rieger M."/>
            <person name="Weichselgartner M."/>
            <person name="de Simone V."/>
            <person name="Obermaier B."/>
            <person name="Mache R."/>
            <person name="Mueller M."/>
            <person name="Kreis M."/>
            <person name="Delseny M."/>
            <person name="Puigdomenech P."/>
            <person name="Watson M."/>
            <person name="Schmidtheini T."/>
            <person name="Reichert B."/>
            <person name="Portetelle D."/>
            <person name="Perez-Alonso M."/>
            <person name="Boutry M."/>
            <person name="Bancroft I."/>
            <person name="Vos P."/>
            <person name="Hoheisel J."/>
            <person name="Zimmermann W."/>
            <person name="Wedler H."/>
            <person name="Ridley P."/>
            <person name="Langham S.-A."/>
            <person name="McCullagh B."/>
            <person name="Bilham L."/>
            <person name="Robben J."/>
            <person name="van der Schueren J."/>
            <person name="Grymonprez B."/>
            <person name="Chuang Y.-J."/>
            <person name="Vandenbussche F."/>
            <person name="Braeken M."/>
            <person name="Weltjens I."/>
            <person name="Voet M."/>
            <person name="Bastiaens I."/>
            <person name="Aert R."/>
            <person name="Defoor E."/>
            <person name="Weitzenegger T."/>
            <person name="Bothe G."/>
            <person name="Ramsperger U."/>
            <person name="Hilbert H."/>
            <person name="Braun M."/>
            <person name="Holzer E."/>
            <person name="Brandt A."/>
            <person name="Peters S."/>
            <person name="van Staveren M."/>
            <person name="Dirkse W."/>
            <person name="Mooijman P."/>
            <person name="Klein Lankhorst R."/>
            <person name="Rose M."/>
            <person name="Hauf J."/>
            <person name="Koetter P."/>
            <person name="Berneiser S."/>
            <person name="Hempel S."/>
            <person name="Feldpausch M."/>
            <person name="Lamberth S."/>
            <person name="Van den Daele H."/>
            <person name="De Keyser A."/>
            <person name="Buysshaert C."/>
            <person name="Gielen J."/>
            <person name="Villarroel R."/>
            <person name="De Clercq R."/>
            <person name="van Montagu M."/>
            <person name="Rogers J."/>
            <person name="Cronin A."/>
            <person name="Quail M.A."/>
            <person name="Bray-Allen S."/>
            <person name="Clark L."/>
            <person name="Doggett J."/>
            <person name="Hall S."/>
            <person name="Kay M."/>
            <person name="Lennard N."/>
            <person name="McLay K."/>
            <person name="Mayes R."/>
            <person name="Pettett A."/>
            <person name="Rajandream M.A."/>
            <person name="Lyne M."/>
            <person name="Benes V."/>
            <person name="Rechmann S."/>
            <person name="Borkova D."/>
            <person name="Bloecker H."/>
            <person name="Scharfe M."/>
            <person name="Grimm M."/>
            <person name="Loehnert T.-H."/>
            <person name="Dose S."/>
            <person name="de Haan M."/>
            <person name="Maarse A.C."/>
            <person name="Schaefer M."/>
            <person name="Mueller-Auer S."/>
            <person name="Gabel C."/>
            <person name="Fuchs M."/>
            <person name="Fartmann B."/>
            <person name="Granderath K."/>
            <person name="Dauner D."/>
            <person name="Herzl A."/>
            <person name="Neumann S."/>
            <person name="Argiriou A."/>
            <person name="Vitale D."/>
            <person name="Liguori R."/>
            <person name="Piravandi E."/>
            <person name="Massenet O."/>
            <person name="Quigley F."/>
            <person name="Clabauld G."/>
            <person name="Muendlein A."/>
            <person name="Felber R."/>
            <person name="Schnabl S."/>
            <person name="Hiller R."/>
            <person name="Schmidt W."/>
            <person name="Lecharny A."/>
            <person name="Aubourg S."/>
            <person name="Chefdor F."/>
            <person name="Cooke R."/>
            <person name="Berger C."/>
            <person name="Monfort A."/>
            <person name="Casacuberta E."/>
            <person name="Gibbons T."/>
            <person name="Weber N."/>
            <person name="Vandenbol M."/>
            <person name="Bargues M."/>
            <person name="Terol J."/>
            <person name="Torres A."/>
            <person name="Perez-Perez A."/>
            <person name="Purnelle B."/>
            <person name="Bent E."/>
            <person name="Johnson S."/>
            <person name="Tacon D."/>
            <person name="Jesse T."/>
            <person name="Heijnen L."/>
            <person name="Schwarz S."/>
            <person name="Scholler P."/>
            <person name="Heber S."/>
            <person name="Francs P."/>
            <person name="Bielke C."/>
            <person name="Frishman D."/>
            <person name="Haase D."/>
            <person name="Lemcke K."/>
            <person name="Mewes H.-W."/>
            <person name="Stocker S."/>
            <person name="Zaccaria P."/>
            <person name="Bevan M."/>
            <person name="Wilson R.K."/>
            <person name="de la Bastide M."/>
            <person name="Habermann K."/>
            <person name="Parnell L."/>
            <person name="Dedhia N."/>
            <person name="Gnoj L."/>
            <person name="Schutz K."/>
            <person name="Huang E."/>
            <person name="Spiegel L."/>
            <person name="Sekhon M."/>
            <person name="Murray J."/>
            <person name="Sheet P."/>
            <person name="Cordes M."/>
            <person name="Abu-Threideh J."/>
            <person name="Stoneking T."/>
            <person name="Kalicki J."/>
            <person name="Graves T."/>
            <person name="Harmon G."/>
            <person name="Edwards J."/>
            <person name="Latreille P."/>
            <person name="Courtney L."/>
            <person name="Cloud J."/>
            <person name="Abbott A."/>
            <person name="Scott K."/>
            <person name="Johnson D."/>
            <person name="Minx P."/>
            <person name="Bentley D."/>
            <person name="Fulton B."/>
            <person name="Miller N."/>
            <person name="Greco T."/>
            <person name="Kemp K."/>
            <person name="Kramer J."/>
            <person name="Fulton L."/>
            <person name="Mardis E."/>
            <person name="Dante M."/>
            <person name="Pepin K."/>
            <person name="Hillier L.W."/>
            <person name="Nelson J."/>
            <person name="Spieth J."/>
            <person name="Ryan E."/>
            <person name="Andrews S."/>
            <person name="Geisel C."/>
            <person name="Layman D."/>
            <person name="Du H."/>
            <person name="Ali J."/>
            <person name="Berghoff A."/>
            <person name="Jones K."/>
            <person name="Drone K."/>
            <person name="Cotton M."/>
            <person name="Joshu C."/>
            <person name="Antonoiu B."/>
            <person name="Zidanic M."/>
            <person name="Strong C."/>
            <person name="Sun H."/>
            <person name="Lamar B."/>
            <person name="Yordan C."/>
            <person name="Ma P."/>
            <person name="Zhong J."/>
            <person name="Preston R."/>
            <person name="Vil D."/>
            <person name="Shekher M."/>
            <person name="Matero A."/>
            <person name="Shah R."/>
            <person name="Swaby I.K."/>
            <person name="O'Shaughnessy A."/>
            <person name="Rodriguez M."/>
            <person name="Hoffman J."/>
            <person name="Till S."/>
            <person name="Granat S."/>
            <person name="Shohdy N."/>
            <person name="Hasegawa A."/>
            <person name="Hameed A."/>
            <person name="Lodhi M."/>
            <person name="Johnson A."/>
            <person name="Chen E."/>
            <person name="Marra M.A."/>
            <person name="Martienssen R."/>
            <person name="McCombie W.R."/>
        </authorList>
    </citation>
    <scope>NUCLEOTIDE SEQUENCE [LARGE SCALE GENOMIC DNA]</scope>
    <source>
        <strain>cv. Columbia</strain>
    </source>
</reference>
<reference key="2">
    <citation type="journal article" date="2017" name="Plant J.">
        <title>Araport11: a complete reannotation of the Arabidopsis thaliana reference genome.</title>
        <authorList>
            <person name="Cheng C.Y."/>
            <person name="Krishnakumar V."/>
            <person name="Chan A.P."/>
            <person name="Thibaud-Nissen F."/>
            <person name="Schobel S."/>
            <person name="Town C.D."/>
        </authorList>
    </citation>
    <scope>GENOME REANNOTATION</scope>
    <source>
        <strain>cv. Columbia</strain>
    </source>
</reference>
<keyword id="KW-0880">Kelch repeat</keyword>
<keyword id="KW-1185">Reference proteome</keyword>
<keyword id="KW-0677">Repeat</keyword>
<dbReference type="EMBL" id="AL035678">
    <property type="protein sequence ID" value="CAB38787.1"/>
    <property type="status" value="ALT_SEQ"/>
    <property type="molecule type" value="Genomic_DNA"/>
</dbReference>
<dbReference type="EMBL" id="AL161583">
    <property type="protein sequence ID" value="CAB80046.1"/>
    <property type="status" value="ALT_SEQ"/>
    <property type="molecule type" value="Genomic_DNA"/>
</dbReference>
<dbReference type="EMBL" id="CP002687">
    <property type="protein sequence ID" value="AEE86202.1"/>
    <property type="molecule type" value="Genomic_DNA"/>
</dbReference>
<dbReference type="PIR" id="T05980">
    <property type="entry name" value="T05980"/>
</dbReference>
<dbReference type="RefSeq" id="NP_195055.1">
    <property type="nucleotide sequence ID" value="NM_119483.1"/>
</dbReference>
<dbReference type="STRING" id="3702.Q9SZA6"/>
<dbReference type="PaxDb" id="3702-AT4G33290.1"/>
<dbReference type="EnsemblPlants" id="AT4G33290.1">
    <property type="protein sequence ID" value="AT4G33290.1"/>
    <property type="gene ID" value="AT4G33290"/>
</dbReference>
<dbReference type="GeneID" id="829465"/>
<dbReference type="Gramene" id="AT4G33290.1">
    <property type="protein sequence ID" value="AT4G33290.1"/>
    <property type="gene ID" value="AT4G33290"/>
</dbReference>
<dbReference type="KEGG" id="ath:AT4G33290"/>
<dbReference type="Araport" id="AT4G33290"/>
<dbReference type="TAIR" id="AT4G33290"/>
<dbReference type="HOGENOM" id="CLU_034692_0_0_1"/>
<dbReference type="InParanoid" id="Q9SZA6"/>
<dbReference type="OMA" id="HICWHEI"/>
<dbReference type="PRO" id="PR:Q9SZA6"/>
<dbReference type="Proteomes" id="UP000006548">
    <property type="component" value="Chromosome 4"/>
</dbReference>
<dbReference type="ExpressionAtlas" id="Q9SZA6">
    <property type="expression patterns" value="baseline and differential"/>
</dbReference>
<dbReference type="CDD" id="cd22157">
    <property type="entry name" value="F-box_AtFBW1-like"/>
    <property type="match status" value="1"/>
</dbReference>
<dbReference type="Gene3D" id="1.20.1280.50">
    <property type="match status" value="1"/>
</dbReference>
<dbReference type="InterPro" id="IPR006527">
    <property type="entry name" value="F-box-assoc_dom_typ1"/>
</dbReference>
<dbReference type="InterPro" id="IPR017451">
    <property type="entry name" value="F-box-assoc_interact_dom"/>
</dbReference>
<dbReference type="InterPro" id="IPR036047">
    <property type="entry name" value="F-box-like_dom_sf"/>
</dbReference>
<dbReference type="InterPro" id="IPR001810">
    <property type="entry name" value="F-box_dom"/>
</dbReference>
<dbReference type="InterPro" id="IPR011043">
    <property type="entry name" value="Gal_Oxase/kelch_b-propeller"/>
</dbReference>
<dbReference type="InterPro" id="IPR050796">
    <property type="entry name" value="SCF_F-box_component"/>
</dbReference>
<dbReference type="NCBIfam" id="TIGR01640">
    <property type="entry name" value="F_box_assoc_1"/>
    <property type="match status" value="1"/>
</dbReference>
<dbReference type="PANTHER" id="PTHR31672">
    <property type="entry name" value="BNACNNG10540D PROTEIN"/>
    <property type="match status" value="1"/>
</dbReference>
<dbReference type="PANTHER" id="PTHR31672:SF13">
    <property type="entry name" value="F-BOX PROTEIN CPR30-LIKE"/>
    <property type="match status" value="1"/>
</dbReference>
<dbReference type="Pfam" id="PF00646">
    <property type="entry name" value="F-box"/>
    <property type="match status" value="1"/>
</dbReference>
<dbReference type="Pfam" id="PF07734">
    <property type="entry name" value="FBA_1"/>
    <property type="match status" value="1"/>
</dbReference>
<dbReference type="SMART" id="SM00256">
    <property type="entry name" value="FBOX"/>
    <property type="match status" value="1"/>
</dbReference>
<dbReference type="SUPFAM" id="SSF81383">
    <property type="entry name" value="F-box domain"/>
    <property type="match status" value="1"/>
</dbReference>
<dbReference type="SUPFAM" id="SSF50965">
    <property type="entry name" value="Galactose oxidase, central domain"/>
    <property type="match status" value="1"/>
</dbReference>
<dbReference type="PROSITE" id="PS50181">
    <property type="entry name" value="FBOX"/>
    <property type="match status" value="1"/>
</dbReference>
<feature type="chain" id="PRO_0000283249" description="F-box/kelch-repeat protein At4g33290">
    <location>
        <begin position="1"/>
        <end position="430"/>
    </location>
</feature>
<feature type="domain" description="F-box" evidence="1">
    <location>
        <begin position="1"/>
        <end position="44"/>
    </location>
</feature>
<feature type="repeat" description="Kelch 1">
    <location>
        <begin position="161"/>
        <end position="207"/>
    </location>
</feature>
<feature type="repeat" description="Kelch 2">
    <location>
        <begin position="312"/>
        <end position="363"/>
    </location>
</feature>
<feature type="repeat" description="Kelch 3">
    <location>
        <begin position="383"/>
        <end position="430"/>
    </location>
</feature>
<accession>Q9SZA6</accession>
<accession>F4JW08</accession>
<comment type="sequence caution" evidence="2">
    <conflict type="erroneous gene model prediction">
        <sequence resource="EMBL-CDS" id="CAB38787"/>
    </conflict>
</comment>
<comment type="sequence caution" evidence="2">
    <conflict type="erroneous gene model prediction">
        <sequence resource="EMBL-CDS" id="CAB80046"/>
    </conflict>
</comment>
<organism>
    <name type="scientific">Arabidopsis thaliana</name>
    <name type="common">Mouse-ear cress</name>
    <dbReference type="NCBI Taxonomy" id="3702"/>
    <lineage>
        <taxon>Eukaryota</taxon>
        <taxon>Viridiplantae</taxon>
        <taxon>Streptophyta</taxon>
        <taxon>Embryophyta</taxon>
        <taxon>Tracheophyta</taxon>
        <taxon>Spermatophyta</taxon>
        <taxon>Magnoliopsida</taxon>
        <taxon>eudicotyledons</taxon>
        <taxon>Gunneridae</taxon>
        <taxon>Pentapetalae</taxon>
        <taxon>rosids</taxon>
        <taxon>malvids</taxon>
        <taxon>Brassicales</taxon>
        <taxon>Brassicaceae</taxon>
        <taxon>Camelineae</taxon>
        <taxon>Arabidopsis</taxon>
    </lineage>
</organism>
<name>FBK91_ARATH</name>
<evidence type="ECO:0000255" key="1">
    <source>
        <dbReference type="PROSITE-ProRule" id="PRU00080"/>
    </source>
</evidence>
<evidence type="ECO:0000305" key="2"/>
<gene>
    <name type="ordered locus">At4g33290</name>
    <name type="ORF">F17M5.50</name>
</gene>
<protein>
    <recommendedName>
        <fullName>F-box/kelch-repeat protein At4g33290</fullName>
    </recommendedName>
</protein>
<sequence length="430" mass="50611">MITDLPKDLIEEILSRVSMTSMRVVRLTCKSWNTLSNSESFKKMHIGKVTSTREGESRVIMLIDYNLFLMSAVLMDDVDPSIEFKGKLSCLKEQVKISQVFHCEGLLLCILKDDTRIVVWNPYRQETRWIIPRYSHRPYVMNNIRYALGYENNKSGRSLKLLRFIDYCYTEKHICWHEIYDFDSDLWTTLDVTPHWYILSNWSCVQGVSLKGNTYWCAREENSDGYNHIICFDFTRERFGPLLPLPVNVIDNEYEYVTSSCVREGKIAALFQHNDSYPYELEIWITTKIEAEMVSWNKFLRIDIEPNNNIMVPFIYGGFFIDEEKKKVALGFDEEFGRKTFNIIGEDGYFREFDRITFNIIEEAGERAGVNCGSYVCSYVPSLVRIKKPAQGKRKRQSSLEKLRFDQNTWIFDSIYQATASQIRRRRPTR</sequence>
<proteinExistence type="predicted"/>